<accession>Q0B2F6</accession>
<dbReference type="EMBL" id="CP000442">
    <property type="protein sequence ID" value="ABI91667.1"/>
    <property type="molecule type" value="Genomic_DNA"/>
</dbReference>
<dbReference type="RefSeq" id="WP_011660998.1">
    <property type="nucleotide sequence ID" value="NC_008392.1"/>
</dbReference>
<dbReference type="PDB" id="4LN5">
    <property type="method" value="X-ray"/>
    <property type="resolution" value="2.10 A"/>
    <property type="chains" value="A=1-328"/>
</dbReference>
<dbReference type="PDB" id="4N15">
    <property type="method" value="X-ray"/>
    <property type="resolution" value="1.65 A"/>
    <property type="chains" value="A=1-328"/>
</dbReference>
<dbReference type="PDB" id="4N17">
    <property type="method" value="X-ray"/>
    <property type="resolution" value="1.50 A"/>
    <property type="chains" value="A=1-328"/>
</dbReference>
<dbReference type="PDBsum" id="4LN5"/>
<dbReference type="PDBsum" id="4N15"/>
<dbReference type="PDBsum" id="4N17"/>
<dbReference type="SMR" id="Q0B2F6"/>
<dbReference type="GeneID" id="93089431"/>
<dbReference type="KEGG" id="bam:Bamb_6123"/>
<dbReference type="PATRIC" id="fig|339670.21.peg.7098"/>
<dbReference type="eggNOG" id="COG1638">
    <property type="taxonomic scope" value="Bacteria"/>
</dbReference>
<dbReference type="EvolutionaryTrace" id="Q0B2F6"/>
<dbReference type="Proteomes" id="UP000000662">
    <property type="component" value="Chromosome 3"/>
</dbReference>
<dbReference type="GO" id="GO:0030288">
    <property type="term" value="C:outer membrane-bounded periplasmic space"/>
    <property type="evidence" value="ECO:0007669"/>
    <property type="project" value="InterPro"/>
</dbReference>
<dbReference type="GO" id="GO:0030246">
    <property type="term" value="F:carbohydrate binding"/>
    <property type="evidence" value="ECO:0007669"/>
    <property type="project" value="TreeGrafter"/>
</dbReference>
<dbReference type="GO" id="GO:0055085">
    <property type="term" value="P:transmembrane transport"/>
    <property type="evidence" value="ECO:0007669"/>
    <property type="project" value="InterPro"/>
</dbReference>
<dbReference type="CDD" id="cd13671">
    <property type="entry name" value="PBP2_TRAP_SBP_like_3"/>
    <property type="match status" value="1"/>
</dbReference>
<dbReference type="Gene3D" id="3.40.190.170">
    <property type="entry name" value="Bacterial extracellular solute-binding protein, family 7"/>
    <property type="match status" value="1"/>
</dbReference>
<dbReference type="InterPro" id="IPR018389">
    <property type="entry name" value="DctP_fam"/>
</dbReference>
<dbReference type="InterPro" id="IPR004682">
    <property type="entry name" value="TRAP_DctP"/>
</dbReference>
<dbReference type="InterPro" id="IPR038404">
    <property type="entry name" value="TRAP_DctP_sf"/>
</dbReference>
<dbReference type="NCBIfam" id="TIGR00787">
    <property type="entry name" value="dctP"/>
    <property type="match status" value="1"/>
</dbReference>
<dbReference type="NCBIfam" id="NF037995">
    <property type="entry name" value="TRAP_S1"/>
    <property type="match status" value="1"/>
</dbReference>
<dbReference type="PANTHER" id="PTHR33376">
    <property type="match status" value="1"/>
</dbReference>
<dbReference type="PANTHER" id="PTHR33376:SF2">
    <property type="entry name" value="DICARBOXYLATE-BINDING PERIPLASMIC PROTEIN"/>
    <property type="match status" value="1"/>
</dbReference>
<dbReference type="Pfam" id="PF03480">
    <property type="entry name" value="DctP"/>
    <property type="match status" value="1"/>
</dbReference>
<dbReference type="PIRSF" id="PIRSF006470">
    <property type="entry name" value="DctB"/>
    <property type="match status" value="1"/>
</dbReference>
<name>DCTP_BURCM</name>
<feature type="signal peptide" evidence="2">
    <location>
        <begin position="1"/>
        <end position="26"/>
    </location>
</feature>
<feature type="chain" id="PRO_5004168636" description="Solute-binding protein Bamb_6123">
    <location>
        <begin position="27"/>
        <end position="328"/>
    </location>
</feature>
<feature type="binding site" evidence="3 8">
    <location>
        <position position="35"/>
    </location>
    <ligand>
        <name>beta-D-galacturonate</name>
        <dbReference type="ChEBI" id="CHEBI:85312"/>
    </ligand>
</feature>
<feature type="binding site" evidence="3 7">
    <location>
        <position position="35"/>
    </location>
    <ligand>
        <name>beta-D-glucuronate</name>
        <dbReference type="ChEBI" id="CHEBI:85313"/>
    </ligand>
</feature>
<feature type="binding site" evidence="3 8">
    <location>
        <position position="73"/>
    </location>
    <ligand>
        <name>beta-D-galacturonate</name>
        <dbReference type="ChEBI" id="CHEBI:85312"/>
    </ligand>
</feature>
<feature type="binding site" evidence="3 7">
    <location>
        <position position="73"/>
    </location>
    <ligand>
        <name>beta-D-glucuronate</name>
        <dbReference type="ChEBI" id="CHEBI:85313"/>
    </ligand>
</feature>
<feature type="binding site" evidence="3 8">
    <location>
        <position position="89"/>
    </location>
    <ligand>
        <name>beta-D-galacturonate</name>
        <dbReference type="ChEBI" id="CHEBI:85312"/>
    </ligand>
</feature>
<feature type="binding site" evidence="3 7">
    <location>
        <position position="89"/>
    </location>
    <ligand>
        <name>beta-D-glucuronate</name>
        <dbReference type="ChEBI" id="CHEBI:85313"/>
    </ligand>
</feature>
<feature type="binding site" evidence="3 8">
    <location>
        <position position="149"/>
    </location>
    <ligand>
        <name>beta-D-galacturonate</name>
        <dbReference type="ChEBI" id="CHEBI:85312"/>
    </ligand>
</feature>
<feature type="binding site" evidence="3 7">
    <location>
        <position position="149"/>
    </location>
    <ligand>
        <name>beta-D-glucuronate</name>
        <dbReference type="ChEBI" id="CHEBI:85313"/>
    </ligand>
</feature>
<feature type="binding site" evidence="3 8">
    <location>
        <position position="209"/>
    </location>
    <ligand>
        <name>beta-D-galacturonate</name>
        <dbReference type="ChEBI" id="CHEBI:85312"/>
    </ligand>
</feature>
<feature type="binding site" evidence="3 7">
    <location>
        <position position="209"/>
    </location>
    <ligand>
        <name>beta-D-glucuronate</name>
        <dbReference type="ChEBI" id="CHEBI:85313"/>
    </ligand>
</feature>
<feature type="binding site" evidence="3 8">
    <location>
        <position position="236"/>
    </location>
    <ligand>
        <name>beta-D-galacturonate</name>
        <dbReference type="ChEBI" id="CHEBI:85312"/>
    </ligand>
</feature>
<feature type="binding site" evidence="3 7">
    <location>
        <position position="236"/>
    </location>
    <ligand>
        <name>beta-D-glucuronate</name>
        <dbReference type="ChEBI" id="CHEBI:85313"/>
    </ligand>
</feature>
<feature type="strand" evidence="9">
    <location>
        <begin position="28"/>
        <end position="32"/>
    </location>
</feature>
<feature type="helix" evidence="9">
    <location>
        <begin position="40"/>
        <end position="55"/>
    </location>
</feature>
<feature type="turn" evidence="9">
    <location>
        <begin position="56"/>
        <end position="58"/>
    </location>
</feature>
<feature type="strand" evidence="9">
    <location>
        <begin position="61"/>
        <end position="65"/>
    </location>
</feature>
<feature type="turn" evidence="9">
    <location>
        <begin position="67"/>
        <end position="70"/>
    </location>
</feature>
<feature type="helix" evidence="9">
    <location>
        <begin position="73"/>
        <end position="81"/>
    </location>
</feature>
<feature type="strand" evidence="9">
    <location>
        <begin position="84"/>
        <end position="91"/>
    </location>
</feature>
<feature type="helix" evidence="9">
    <location>
        <begin position="92"/>
        <end position="95"/>
    </location>
</feature>
<feature type="turn" evidence="9">
    <location>
        <begin position="96"/>
        <end position="98"/>
    </location>
</feature>
<feature type="helix" evidence="9">
    <location>
        <begin position="100"/>
        <end position="106"/>
    </location>
</feature>
<feature type="strand" evidence="9">
    <location>
        <begin position="111"/>
        <end position="113"/>
    </location>
</feature>
<feature type="helix" evidence="9">
    <location>
        <begin position="114"/>
        <end position="121"/>
    </location>
</feature>
<feature type="helix" evidence="9">
    <location>
        <begin position="124"/>
        <end position="131"/>
    </location>
</feature>
<feature type="helix" evidence="9">
    <location>
        <begin position="132"/>
        <end position="136"/>
    </location>
</feature>
<feature type="strand" evidence="9">
    <location>
        <begin position="138"/>
        <end position="144"/>
    </location>
</feature>
<feature type="strand" evidence="9">
    <location>
        <begin position="149"/>
        <end position="155"/>
    </location>
</feature>
<feature type="helix" evidence="9">
    <location>
        <begin position="160"/>
        <end position="163"/>
    </location>
</feature>
<feature type="strand" evidence="9">
    <location>
        <begin position="167"/>
        <end position="170"/>
    </location>
</feature>
<feature type="helix" evidence="9">
    <location>
        <begin position="174"/>
        <end position="182"/>
    </location>
</feature>
<feature type="strand" evidence="9">
    <location>
        <begin position="186"/>
        <end position="189"/>
    </location>
</feature>
<feature type="helix" evidence="9">
    <location>
        <begin position="192"/>
        <end position="194"/>
    </location>
</feature>
<feature type="helix" evidence="9">
    <location>
        <begin position="195"/>
        <end position="200"/>
    </location>
</feature>
<feature type="strand" evidence="9">
    <location>
        <begin position="205"/>
        <end position="209"/>
    </location>
</feature>
<feature type="helix" evidence="9">
    <location>
        <begin position="211"/>
        <end position="216"/>
    </location>
</feature>
<feature type="helix" evidence="9">
    <location>
        <begin position="219"/>
        <end position="222"/>
    </location>
</feature>
<feature type="strand" evidence="9">
    <location>
        <begin position="225"/>
        <end position="232"/>
    </location>
</feature>
<feature type="strand" evidence="9">
    <location>
        <begin position="236"/>
        <end position="241"/>
    </location>
</feature>
<feature type="helix" evidence="9">
    <location>
        <begin position="242"/>
        <end position="245"/>
    </location>
</feature>
<feature type="helix" evidence="9">
    <location>
        <begin position="250"/>
        <end position="284"/>
    </location>
</feature>
<feature type="strand" evidence="9">
    <location>
        <begin position="288"/>
        <end position="290"/>
    </location>
</feature>
<feature type="helix" evidence="9">
    <location>
        <begin position="292"/>
        <end position="294"/>
    </location>
</feature>
<feature type="helix" evidence="9">
    <location>
        <begin position="297"/>
        <end position="304"/>
    </location>
</feature>
<feature type="helix" evidence="9">
    <location>
        <begin position="306"/>
        <end position="311"/>
    </location>
</feature>
<feature type="helix" evidence="9">
    <location>
        <begin position="315"/>
        <end position="325"/>
    </location>
</feature>
<gene>
    <name evidence="5" type="ordered locus">Bamb_6123</name>
</gene>
<organism evidence="5">
    <name type="scientific">Burkholderia ambifaria (strain ATCC BAA-244 / DSM 16087 / CCUG 44356 / LMG 19182 / AMMD)</name>
    <name type="common">Burkholderia cepacia (strain AMMD)</name>
    <dbReference type="NCBI Taxonomy" id="339670"/>
    <lineage>
        <taxon>Bacteria</taxon>
        <taxon>Pseudomonadati</taxon>
        <taxon>Pseudomonadota</taxon>
        <taxon>Betaproteobacteria</taxon>
        <taxon>Burkholderiales</taxon>
        <taxon>Burkholderiaceae</taxon>
        <taxon>Burkholderia</taxon>
        <taxon>Burkholderia cepacia complex</taxon>
    </lineage>
</organism>
<sequence length="328" mass="35995">MTHRFPRSRTALAVALMAGFAMSAQARVFRSADVHGDSFPTNMAVKFMGDELSKLTGGKDSIKVFGNSALGSEKDTVDQVRIGAIDMARVNGASFNEIVPESLIPSFPFLFRDVDHFRKAMYGPAGQKILDAFAAKGMIALTFYESGARSIYAKRPVRTPADMKGLKVRVQPSDLMVDEIRAMGGTPTPMPFAEVYTGLKTGLVDAAENNLPSYEETKHFEVAPDYSETQHAMTPEVLVFSKKIWDTLSPQEQAAIRKAAADSVPYYQKLWTAREASAQQAVTKGGANILPAAQVDRAAFVKAMQPLWTKYEKTPQMKQIVDEIEATK</sequence>
<protein>
    <recommendedName>
        <fullName evidence="4">Solute-binding protein Bamb_6123</fullName>
    </recommendedName>
</protein>
<proteinExistence type="evidence at protein level"/>
<comment type="function">
    <text evidence="3 4">Solute-binding protein that binds D-galacturonate and D-glucuronate (in vitro) (PubMed:25540822). Probably part of a tripartite ATP-independent periplasmic (TRAP) transport system that mediates solute transport into the cytoplasm.</text>
</comment>
<comment type="subunit">
    <text evidence="1">The complex is comprised of an extracytoplasmic solute-binding protein and a heteromeric permease formed by two transmembrane proteins.</text>
</comment>
<comment type="subcellular location">
    <subcellularLocation>
        <location evidence="1">Periplasm</location>
    </subcellularLocation>
</comment>
<comment type="similarity">
    <text evidence="4">Belongs to the bacterial solute-binding protein 7 family.</text>
</comment>
<evidence type="ECO:0000250" key="1">
    <source>
        <dbReference type="UniProtKB" id="P37735"/>
    </source>
</evidence>
<evidence type="ECO:0000255" key="2"/>
<evidence type="ECO:0000269" key="3">
    <source>
    </source>
</evidence>
<evidence type="ECO:0000305" key="4"/>
<evidence type="ECO:0000312" key="5">
    <source>
        <dbReference type="EMBL" id="ABI91667.1"/>
    </source>
</evidence>
<evidence type="ECO:0007744" key="6">
    <source>
        <dbReference type="PDB" id="4LN5"/>
    </source>
</evidence>
<evidence type="ECO:0007744" key="7">
    <source>
        <dbReference type="PDB" id="4N15"/>
    </source>
</evidence>
<evidence type="ECO:0007744" key="8">
    <source>
        <dbReference type="PDB" id="4N17"/>
    </source>
</evidence>
<evidence type="ECO:0007829" key="9">
    <source>
        <dbReference type="PDB" id="4N17"/>
    </source>
</evidence>
<reference key="1">
    <citation type="submission" date="2006-08" db="EMBL/GenBank/DDBJ databases">
        <title>Complete sequence of chromosome 3 of Burkholderia cepacia AMMD.</title>
        <authorList>
            <person name="Copeland A."/>
            <person name="Lucas S."/>
            <person name="Lapidus A."/>
            <person name="Barry K."/>
            <person name="Detter J.C."/>
            <person name="Glavina del Rio T."/>
            <person name="Hammon N."/>
            <person name="Israni S."/>
            <person name="Pitluck S."/>
            <person name="Bruce D."/>
            <person name="Chain P."/>
            <person name="Malfatti S."/>
            <person name="Shin M."/>
            <person name="Vergez L."/>
            <person name="Schmutz J."/>
            <person name="Larimer F."/>
            <person name="Land M."/>
            <person name="Hauser L."/>
            <person name="Kyrpides N."/>
            <person name="Kim E."/>
            <person name="Parke J."/>
            <person name="Coenye T."/>
            <person name="Konstantinidis K."/>
            <person name="Ramette A."/>
            <person name="Tiedje J."/>
            <person name="Richardson P."/>
        </authorList>
    </citation>
    <scope>NUCLEOTIDE SEQUENCE [LARGE SCALE GENOMIC DNA]</scope>
    <source>
        <strain>ATCC BAA-244 / DSM 16087 / CCUG 44356 / LMG 19182 / AMMD</strain>
    </source>
</reference>
<reference evidence="6 7 8" key="2">
    <citation type="journal article" date="2015" name="Biochemistry">
        <title>Experimental strategies for functional annotation and metabolism discovery: targeted screening of solute binding proteins and unbiased panning of metabolomes.</title>
        <authorList>
            <person name="Vetting M.W."/>
            <person name="Al-Obaidi N."/>
            <person name="Zhao S."/>
            <person name="San Francisco B."/>
            <person name="Kim J."/>
            <person name="Wichelecki D.J."/>
            <person name="Bouvier J.T."/>
            <person name="Solbiati J.O."/>
            <person name="Vu H."/>
            <person name="Zhang X."/>
            <person name="Rodionov D.A."/>
            <person name="Love J.D."/>
            <person name="Hillerich B.S."/>
            <person name="Seidel R.D."/>
            <person name="Quinn R.J."/>
            <person name="Osterman A.L."/>
            <person name="Cronan J.E."/>
            <person name="Jacobson M.P."/>
            <person name="Gerlt J.A."/>
            <person name="Almo S.C."/>
        </authorList>
    </citation>
    <scope>X-RAY CRYSTALLOGRAPHY (1.50 ANGSTROMS) IN COMPLEXES WITH BETA-D-GALACTURONATE AND BETA-D-GLUCURONATE</scope>
    <scope>FUNCTION</scope>
</reference>
<keyword id="KW-0002">3D-structure</keyword>
<keyword id="KW-0574">Periplasm</keyword>
<keyword id="KW-0732">Signal</keyword>
<keyword id="KW-0762">Sugar transport</keyword>
<keyword id="KW-0813">Transport</keyword>